<sequence>MKKVFIRTFGCQMNEYDSEKMLSVLAEEHGGIEQVTQADEADIILFNTCSVREKAQEKVFSDLGRVRPLKEKNPGLIIGVAGCVASQEGENIIKRAPYVDVVFGPQTLHRLPKMIVDKETSGLSQVDISFPEIEKFDHLPPARVEGGAAFVSIMEGCSKYCSFCVVPYTRGEEFSRPLNDVLTEIANLAQQGVKEINLLGQNVNAYRGEMDDGEICDFATLLRIVHEIPGIERMRFTTSHPREFTDSIIECYRDLPKLVSHLHLPIQSGSDRVLSAMKRGYTALEYKSIIRKLRAIRPDLCLSSDFIVGFPGETEREFEQTLKLVKDIAFDLSFVFIYSPRPGTPAANLPDDTPHEEKVRRLEALNEVIEAETARINQTMIGTVQRCLVEGISKKDPDQLQARTVNNRVVNFTGTPDMINQMIDLEITEAYTFSLRGKIVEA</sequence>
<proteinExistence type="inferred from homology"/>
<comment type="function">
    <text evidence="1">Catalyzes the methylthiolation of N6-(dimethylallyl)adenosine (i(6)A), leading to the formation of 2-methylthio-N6-(dimethylallyl)adenosine (ms(2)i(6)A) at position 37 in tRNAs that read codons beginning with uridine.</text>
</comment>
<comment type="catalytic activity">
    <reaction evidence="1">
        <text>N(6)-dimethylallyladenosine(37) in tRNA + (sulfur carrier)-SH + AH2 + 2 S-adenosyl-L-methionine = 2-methylsulfanyl-N(6)-dimethylallyladenosine(37) in tRNA + (sulfur carrier)-H + 5'-deoxyadenosine + L-methionine + A + S-adenosyl-L-homocysteine + 2 H(+)</text>
        <dbReference type="Rhea" id="RHEA:37067"/>
        <dbReference type="Rhea" id="RHEA-COMP:10375"/>
        <dbReference type="Rhea" id="RHEA-COMP:10376"/>
        <dbReference type="Rhea" id="RHEA-COMP:14737"/>
        <dbReference type="Rhea" id="RHEA-COMP:14739"/>
        <dbReference type="ChEBI" id="CHEBI:13193"/>
        <dbReference type="ChEBI" id="CHEBI:15378"/>
        <dbReference type="ChEBI" id="CHEBI:17319"/>
        <dbReference type="ChEBI" id="CHEBI:17499"/>
        <dbReference type="ChEBI" id="CHEBI:29917"/>
        <dbReference type="ChEBI" id="CHEBI:57844"/>
        <dbReference type="ChEBI" id="CHEBI:57856"/>
        <dbReference type="ChEBI" id="CHEBI:59789"/>
        <dbReference type="ChEBI" id="CHEBI:64428"/>
        <dbReference type="ChEBI" id="CHEBI:74415"/>
        <dbReference type="ChEBI" id="CHEBI:74417"/>
        <dbReference type="EC" id="2.8.4.3"/>
    </reaction>
</comment>
<comment type="cofactor">
    <cofactor evidence="1">
        <name>[4Fe-4S] cluster</name>
        <dbReference type="ChEBI" id="CHEBI:49883"/>
    </cofactor>
    <text evidence="1">Binds 2 [4Fe-4S] clusters. One cluster is coordinated with 3 cysteines and an exchangeable S-adenosyl-L-methionine.</text>
</comment>
<comment type="subunit">
    <text evidence="1">Monomer.</text>
</comment>
<comment type="subcellular location">
    <subcellularLocation>
        <location evidence="1">Cytoplasm</location>
    </subcellularLocation>
</comment>
<comment type="similarity">
    <text evidence="1">Belongs to the methylthiotransferase family. MiaB subfamily.</text>
</comment>
<name>MIAB_NEIG1</name>
<reference key="1">
    <citation type="submission" date="2003-03" db="EMBL/GenBank/DDBJ databases">
        <title>The complete genome sequence of Neisseria gonorrhoeae.</title>
        <authorList>
            <person name="Lewis L.A."/>
            <person name="Gillaspy A.F."/>
            <person name="McLaughlin R.E."/>
            <person name="Gipson M."/>
            <person name="Ducey T.F."/>
            <person name="Ownbey T."/>
            <person name="Hartman K."/>
            <person name="Nydick C."/>
            <person name="Carson M.B."/>
            <person name="Vaughn J."/>
            <person name="Thomson C."/>
            <person name="Song L."/>
            <person name="Lin S."/>
            <person name="Yuan X."/>
            <person name="Najar F."/>
            <person name="Zhan M."/>
            <person name="Ren Q."/>
            <person name="Zhu H."/>
            <person name="Qi S."/>
            <person name="Kenton S.M."/>
            <person name="Lai H."/>
            <person name="White J.D."/>
            <person name="Clifton S."/>
            <person name="Roe B.A."/>
            <person name="Dyer D.W."/>
        </authorList>
    </citation>
    <scope>NUCLEOTIDE SEQUENCE [LARGE SCALE GENOMIC DNA]</scope>
    <source>
        <strain>ATCC 700825 / FA 1090</strain>
    </source>
</reference>
<keyword id="KW-0004">4Fe-4S</keyword>
<keyword id="KW-0963">Cytoplasm</keyword>
<keyword id="KW-0408">Iron</keyword>
<keyword id="KW-0411">Iron-sulfur</keyword>
<keyword id="KW-0479">Metal-binding</keyword>
<keyword id="KW-1185">Reference proteome</keyword>
<keyword id="KW-0949">S-adenosyl-L-methionine</keyword>
<keyword id="KW-0808">Transferase</keyword>
<keyword id="KW-0819">tRNA processing</keyword>
<protein>
    <recommendedName>
        <fullName evidence="1">tRNA-2-methylthio-N(6)-dimethylallyladenosine synthase</fullName>
        <ecNumber evidence="1">2.8.4.3</ecNumber>
    </recommendedName>
    <alternativeName>
        <fullName evidence="1">(Dimethylallyl)adenosine tRNA methylthiotransferase MiaB</fullName>
    </alternativeName>
    <alternativeName>
        <fullName evidence="1">tRNA-i(6)A37 methylthiotransferase</fullName>
    </alternativeName>
</protein>
<accession>Q5FAI1</accession>
<evidence type="ECO:0000255" key="1">
    <source>
        <dbReference type="HAMAP-Rule" id="MF_01864"/>
    </source>
</evidence>
<evidence type="ECO:0000255" key="2">
    <source>
        <dbReference type="PROSITE-ProRule" id="PRU01266"/>
    </source>
</evidence>
<gene>
    <name evidence="1" type="primary">miaB</name>
    <name type="ordered locus">NGO_0037</name>
</gene>
<feature type="chain" id="PRO_0000374400" description="tRNA-2-methylthio-N(6)-dimethylallyladenosine synthase">
    <location>
        <begin position="1"/>
        <end position="442"/>
    </location>
</feature>
<feature type="domain" description="MTTase N-terminal" evidence="1">
    <location>
        <begin position="2"/>
        <end position="120"/>
    </location>
</feature>
<feature type="domain" description="Radical SAM core" evidence="2">
    <location>
        <begin position="143"/>
        <end position="375"/>
    </location>
</feature>
<feature type="domain" description="TRAM" evidence="1">
    <location>
        <begin position="378"/>
        <end position="441"/>
    </location>
</feature>
<feature type="binding site" evidence="1">
    <location>
        <position position="11"/>
    </location>
    <ligand>
        <name>[4Fe-4S] cluster</name>
        <dbReference type="ChEBI" id="CHEBI:49883"/>
        <label>1</label>
    </ligand>
</feature>
<feature type="binding site" evidence="1">
    <location>
        <position position="49"/>
    </location>
    <ligand>
        <name>[4Fe-4S] cluster</name>
        <dbReference type="ChEBI" id="CHEBI:49883"/>
        <label>1</label>
    </ligand>
</feature>
<feature type="binding site" evidence="1">
    <location>
        <position position="83"/>
    </location>
    <ligand>
        <name>[4Fe-4S] cluster</name>
        <dbReference type="ChEBI" id="CHEBI:49883"/>
        <label>1</label>
    </ligand>
</feature>
<feature type="binding site" evidence="1">
    <location>
        <position position="157"/>
    </location>
    <ligand>
        <name>[4Fe-4S] cluster</name>
        <dbReference type="ChEBI" id="CHEBI:49883"/>
        <label>2</label>
        <note>4Fe-4S-S-AdoMet</note>
    </ligand>
</feature>
<feature type="binding site" evidence="1">
    <location>
        <position position="161"/>
    </location>
    <ligand>
        <name>[4Fe-4S] cluster</name>
        <dbReference type="ChEBI" id="CHEBI:49883"/>
        <label>2</label>
        <note>4Fe-4S-S-AdoMet</note>
    </ligand>
</feature>
<feature type="binding site" evidence="1">
    <location>
        <position position="164"/>
    </location>
    <ligand>
        <name>[4Fe-4S] cluster</name>
        <dbReference type="ChEBI" id="CHEBI:49883"/>
        <label>2</label>
        <note>4Fe-4S-S-AdoMet</note>
    </ligand>
</feature>
<dbReference type="EC" id="2.8.4.3" evidence="1"/>
<dbReference type="EMBL" id="AE004969">
    <property type="protein sequence ID" value="AAW88806.1"/>
    <property type="molecule type" value="Genomic_DNA"/>
</dbReference>
<dbReference type="RefSeq" id="WP_010950977.1">
    <property type="nucleotide sequence ID" value="NC_002946.2"/>
</dbReference>
<dbReference type="RefSeq" id="YP_207218.1">
    <property type="nucleotide sequence ID" value="NC_002946.2"/>
</dbReference>
<dbReference type="SMR" id="Q5FAI1"/>
<dbReference type="STRING" id="242231.NGO_0037"/>
<dbReference type="DNASU" id="3282401"/>
<dbReference type="KEGG" id="ngo:NGO_0037"/>
<dbReference type="PATRIC" id="fig|242231.10.peg.38"/>
<dbReference type="HOGENOM" id="CLU_018697_2_0_4"/>
<dbReference type="Proteomes" id="UP000000535">
    <property type="component" value="Chromosome"/>
</dbReference>
<dbReference type="GO" id="GO:0005829">
    <property type="term" value="C:cytosol"/>
    <property type="evidence" value="ECO:0007669"/>
    <property type="project" value="TreeGrafter"/>
</dbReference>
<dbReference type="GO" id="GO:0051539">
    <property type="term" value="F:4 iron, 4 sulfur cluster binding"/>
    <property type="evidence" value="ECO:0007669"/>
    <property type="project" value="UniProtKB-UniRule"/>
</dbReference>
<dbReference type="GO" id="GO:0046872">
    <property type="term" value="F:metal ion binding"/>
    <property type="evidence" value="ECO:0007669"/>
    <property type="project" value="UniProtKB-KW"/>
</dbReference>
<dbReference type="GO" id="GO:0035597">
    <property type="term" value="F:N6-isopentenyladenosine methylthiotransferase activity"/>
    <property type="evidence" value="ECO:0007669"/>
    <property type="project" value="TreeGrafter"/>
</dbReference>
<dbReference type="CDD" id="cd01335">
    <property type="entry name" value="Radical_SAM"/>
    <property type="match status" value="1"/>
</dbReference>
<dbReference type="FunFam" id="3.40.50.12160:FF:000001">
    <property type="entry name" value="tRNA-2-methylthio-N(6)-dimethylallyladenosine synthase"/>
    <property type="match status" value="1"/>
</dbReference>
<dbReference type="FunFam" id="3.80.30.20:FF:000001">
    <property type="entry name" value="tRNA-2-methylthio-N(6)-dimethylallyladenosine synthase 2"/>
    <property type="match status" value="1"/>
</dbReference>
<dbReference type="Gene3D" id="3.40.50.12160">
    <property type="entry name" value="Methylthiotransferase, N-terminal domain"/>
    <property type="match status" value="1"/>
</dbReference>
<dbReference type="Gene3D" id="3.80.30.20">
    <property type="entry name" value="tm_1862 like domain"/>
    <property type="match status" value="1"/>
</dbReference>
<dbReference type="HAMAP" id="MF_01864">
    <property type="entry name" value="tRNA_metthiotr_MiaB"/>
    <property type="match status" value="1"/>
</dbReference>
<dbReference type="InterPro" id="IPR006638">
    <property type="entry name" value="Elp3/MiaA/NifB-like_rSAM"/>
</dbReference>
<dbReference type="InterPro" id="IPR005839">
    <property type="entry name" value="Methylthiotransferase"/>
</dbReference>
<dbReference type="InterPro" id="IPR020612">
    <property type="entry name" value="Methylthiotransferase_CS"/>
</dbReference>
<dbReference type="InterPro" id="IPR013848">
    <property type="entry name" value="Methylthiotransferase_N"/>
</dbReference>
<dbReference type="InterPro" id="IPR038135">
    <property type="entry name" value="Methylthiotransferase_N_sf"/>
</dbReference>
<dbReference type="InterPro" id="IPR006463">
    <property type="entry name" value="MiaB_methiolase"/>
</dbReference>
<dbReference type="InterPro" id="IPR007197">
    <property type="entry name" value="rSAM"/>
</dbReference>
<dbReference type="InterPro" id="IPR023404">
    <property type="entry name" value="rSAM_horseshoe"/>
</dbReference>
<dbReference type="InterPro" id="IPR002792">
    <property type="entry name" value="TRAM_dom"/>
</dbReference>
<dbReference type="NCBIfam" id="TIGR01574">
    <property type="entry name" value="miaB-methiolase"/>
    <property type="match status" value="1"/>
</dbReference>
<dbReference type="NCBIfam" id="TIGR00089">
    <property type="entry name" value="MiaB/RimO family radical SAM methylthiotransferase"/>
    <property type="match status" value="1"/>
</dbReference>
<dbReference type="PANTHER" id="PTHR43020">
    <property type="entry name" value="CDK5 REGULATORY SUBUNIT-ASSOCIATED PROTEIN 1"/>
    <property type="match status" value="1"/>
</dbReference>
<dbReference type="PANTHER" id="PTHR43020:SF2">
    <property type="entry name" value="MITOCHONDRIAL TRNA METHYLTHIOTRANSFERASE CDK5RAP1"/>
    <property type="match status" value="1"/>
</dbReference>
<dbReference type="Pfam" id="PF04055">
    <property type="entry name" value="Radical_SAM"/>
    <property type="match status" value="1"/>
</dbReference>
<dbReference type="Pfam" id="PF01938">
    <property type="entry name" value="TRAM"/>
    <property type="match status" value="1"/>
</dbReference>
<dbReference type="Pfam" id="PF00919">
    <property type="entry name" value="UPF0004"/>
    <property type="match status" value="1"/>
</dbReference>
<dbReference type="SFLD" id="SFLDF00273">
    <property type="entry name" value="(dimethylallyl)adenosine_tRNA"/>
    <property type="match status" value="1"/>
</dbReference>
<dbReference type="SFLD" id="SFLDG01082">
    <property type="entry name" value="B12-binding_domain_containing"/>
    <property type="match status" value="1"/>
</dbReference>
<dbReference type="SFLD" id="SFLDS00029">
    <property type="entry name" value="Radical_SAM"/>
    <property type="match status" value="1"/>
</dbReference>
<dbReference type="SMART" id="SM00729">
    <property type="entry name" value="Elp3"/>
    <property type="match status" value="1"/>
</dbReference>
<dbReference type="SUPFAM" id="SSF102114">
    <property type="entry name" value="Radical SAM enzymes"/>
    <property type="match status" value="1"/>
</dbReference>
<dbReference type="PROSITE" id="PS51449">
    <property type="entry name" value="MTTASE_N"/>
    <property type="match status" value="1"/>
</dbReference>
<dbReference type="PROSITE" id="PS01278">
    <property type="entry name" value="MTTASE_RADICAL"/>
    <property type="match status" value="1"/>
</dbReference>
<dbReference type="PROSITE" id="PS51918">
    <property type="entry name" value="RADICAL_SAM"/>
    <property type="match status" value="1"/>
</dbReference>
<dbReference type="PROSITE" id="PS50926">
    <property type="entry name" value="TRAM"/>
    <property type="match status" value="1"/>
</dbReference>
<organism>
    <name type="scientific">Neisseria gonorrhoeae (strain ATCC 700825 / FA 1090)</name>
    <dbReference type="NCBI Taxonomy" id="242231"/>
    <lineage>
        <taxon>Bacteria</taxon>
        <taxon>Pseudomonadati</taxon>
        <taxon>Pseudomonadota</taxon>
        <taxon>Betaproteobacteria</taxon>
        <taxon>Neisseriales</taxon>
        <taxon>Neisseriaceae</taxon>
        <taxon>Neisseria</taxon>
    </lineage>
</organism>